<protein>
    <recommendedName>
        <fullName>NADH dehydrogenase [ubiquinone] flavoprotein 1, mitochondrial</fullName>
        <ecNumber evidence="3">7.1.1.2</ecNumber>
    </recommendedName>
    <alternativeName>
        <fullName>Complex I-51kD</fullName>
        <shortName>CI-51kD</shortName>
    </alternativeName>
    <alternativeName>
        <fullName evidence="3">NADH-ubiquinone oxidoreductase 51 kDa subunit</fullName>
    </alternativeName>
</protein>
<reference key="1">
    <citation type="journal article" date="2006" name="Gene">
        <title>Adaptive selection of mitochondrial complex I subunits during primate radiation.</title>
        <authorList>
            <person name="Mishmar D."/>
            <person name="Ruiz-Pesini E."/>
            <person name="Mondragon-Palomino M."/>
            <person name="Procaccio V."/>
            <person name="Gaut B."/>
            <person name="Wallace D.C."/>
        </authorList>
    </citation>
    <scope>NUCLEOTIDE SEQUENCE [MRNA]</scope>
</reference>
<proteinExistence type="evidence at transcript level"/>
<accession>Q0MQI6</accession>
<keyword id="KW-0004">4Fe-4S</keyword>
<keyword id="KW-0007">Acetylation</keyword>
<keyword id="KW-0249">Electron transport</keyword>
<keyword id="KW-0285">Flavoprotein</keyword>
<keyword id="KW-0288">FMN</keyword>
<keyword id="KW-0408">Iron</keyword>
<keyword id="KW-0411">Iron-sulfur</keyword>
<keyword id="KW-0472">Membrane</keyword>
<keyword id="KW-0479">Metal-binding</keyword>
<keyword id="KW-0488">Methylation</keyword>
<keyword id="KW-0496">Mitochondrion</keyword>
<keyword id="KW-0999">Mitochondrion inner membrane</keyword>
<keyword id="KW-0520">NAD</keyword>
<keyword id="KW-0560">Oxidoreductase</keyword>
<keyword id="KW-1185">Reference proteome</keyword>
<keyword id="KW-0679">Respiratory chain</keyword>
<keyword id="KW-0809">Transit peptide</keyword>
<keyword id="KW-1278">Translocase</keyword>
<keyword id="KW-0813">Transport</keyword>
<keyword id="KW-0830">Ubiquinone</keyword>
<evidence type="ECO:0000250" key="1"/>
<evidence type="ECO:0000250" key="2">
    <source>
        <dbReference type="UniProtKB" id="P25708"/>
    </source>
</evidence>
<evidence type="ECO:0000250" key="3">
    <source>
        <dbReference type="UniProtKB" id="P49821"/>
    </source>
</evidence>
<evidence type="ECO:0000250" key="4">
    <source>
        <dbReference type="UniProtKB" id="Q91YT0"/>
    </source>
</evidence>
<evidence type="ECO:0000255" key="5"/>
<evidence type="ECO:0000305" key="6"/>
<gene>
    <name evidence="3" type="primary">NDUFV1</name>
</gene>
<feature type="transit peptide" description="Mitochondrion" evidence="5">
    <location>
        <begin position="1"/>
        <end position="20"/>
    </location>
</feature>
<feature type="chain" id="PRO_0000251877" description="NADH dehydrogenase [ubiquinone] flavoprotein 1, mitochondrial">
    <location>
        <begin position="21"/>
        <end position="464"/>
    </location>
</feature>
<feature type="binding site" evidence="1">
    <location>
        <begin position="87"/>
        <end position="96"/>
    </location>
    <ligand>
        <name>NADH</name>
        <dbReference type="ChEBI" id="CHEBI:57945"/>
    </ligand>
</feature>
<feature type="binding site" evidence="1">
    <location>
        <begin position="199"/>
        <end position="247"/>
    </location>
    <ligand>
        <name>FMN</name>
        <dbReference type="ChEBI" id="CHEBI:58210"/>
    </ligand>
</feature>
<feature type="binding site" evidence="3">
    <location>
        <position position="379"/>
    </location>
    <ligand>
        <name>[4Fe-4S] cluster</name>
        <dbReference type="ChEBI" id="CHEBI:49883"/>
    </ligand>
</feature>
<feature type="binding site" evidence="3">
    <location>
        <position position="382"/>
    </location>
    <ligand>
        <name>[4Fe-4S] cluster</name>
        <dbReference type="ChEBI" id="CHEBI:49883"/>
    </ligand>
</feature>
<feature type="binding site" evidence="3">
    <location>
        <position position="385"/>
    </location>
    <ligand>
        <name>[4Fe-4S] cluster</name>
        <dbReference type="ChEBI" id="CHEBI:49883"/>
    </ligand>
</feature>
<feature type="binding site" evidence="3">
    <location>
        <position position="425"/>
    </location>
    <ligand>
        <name>[4Fe-4S] cluster</name>
        <dbReference type="ChEBI" id="CHEBI:49883"/>
    </ligand>
</feature>
<feature type="modified residue" description="N6-acetyllysine; alternate" evidence="4">
    <location>
        <position position="81"/>
    </location>
</feature>
<feature type="modified residue" description="N6-succinyllysine; alternate" evidence="4">
    <location>
        <position position="81"/>
    </location>
</feature>
<feature type="modified residue" description="N6-acetyllysine" evidence="4">
    <location>
        <position position="104"/>
    </location>
</feature>
<feature type="modified residue" description="Omega-N-methylarginine" evidence="4">
    <location>
        <position position="257"/>
    </location>
</feature>
<feature type="modified residue" description="N6-acetyllysine" evidence="4">
    <location>
        <position position="375"/>
    </location>
</feature>
<organism>
    <name type="scientific">Pan troglodytes</name>
    <name type="common">Chimpanzee</name>
    <dbReference type="NCBI Taxonomy" id="9598"/>
    <lineage>
        <taxon>Eukaryota</taxon>
        <taxon>Metazoa</taxon>
        <taxon>Chordata</taxon>
        <taxon>Craniata</taxon>
        <taxon>Vertebrata</taxon>
        <taxon>Euteleostomi</taxon>
        <taxon>Mammalia</taxon>
        <taxon>Eutheria</taxon>
        <taxon>Euarchontoglires</taxon>
        <taxon>Primates</taxon>
        <taxon>Haplorrhini</taxon>
        <taxon>Catarrhini</taxon>
        <taxon>Hominidae</taxon>
        <taxon>Pan</taxon>
    </lineage>
</organism>
<sequence length="464" mass="50803">MLATRRLLGWSLPARVSVRFSGDTTAPKKTSFGSLKDEDRIFTNLYGRHDWRLKGSLSRGDWYKTKEILLKGPDWILGEIKTSGLRGRGGAGFPTGLKWSFMNKPSDGRPKYLVVNADEGEPGTCKDREILRHDPHKLVEGCLVGGRAMGARAAYIYIRGEFYNEASNLQVAIREAYEAGLIGKNACGSGYDFDVFVVRGAGAYICGEETALIESIEGKQGKPRLKPPFPADVGVFGCPTTVANVETVAVSPTICRRGGTWFAGFGRERNSGTKLFNISGHVNHPCTVEEEMSVPLKELIEKHAGGVTGGWDNLLAVIPGGSSTPLIPKSVCETVLMDFDALVQAQTGLGTAAVIVMDRSTDIVKAIARLIEFYKHESCGQCTPCREGVDWMNKVMARFVRGDARPAEIDSLWEISKQIEGHTICALGDGAAWPVQGLIRHFRPELEERMQRFAQQHQARQAAS</sequence>
<name>NDUV1_PANTR</name>
<comment type="function">
    <text evidence="3">Core subunit of the mitochondrial membrane respiratory chain NADH dehydrogenase (Complex I) which catalyzes electron transfer from NADH through the respiratory chain, using ubiquinone as an electron acceptor. Part of the peripheral arm of the enzyme, where the electrons from NADH are accepted by flavin mononucleotide (FMN) and then passed along a chain of iron-sulfur clusters by electron tunnelling to the final acceptor ubiquinone. Contains FMN, which is the initial electron acceptor as well as one iron-sulfur cluster.</text>
</comment>
<comment type="catalytic activity">
    <reaction evidence="3">
        <text>a ubiquinone + NADH + 5 H(+)(in) = a ubiquinol + NAD(+) + 4 H(+)(out)</text>
        <dbReference type="Rhea" id="RHEA:29091"/>
        <dbReference type="Rhea" id="RHEA-COMP:9565"/>
        <dbReference type="Rhea" id="RHEA-COMP:9566"/>
        <dbReference type="ChEBI" id="CHEBI:15378"/>
        <dbReference type="ChEBI" id="CHEBI:16389"/>
        <dbReference type="ChEBI" id="CHEBI:17976"/>
        <dbReference type="ChEBI" id="CHEBI:57540"/>
        <dbReference type="ChEBI" id="CHEBI:57945"/>
        <dbReference type="EC" id="7.1.1.2"/>
    </reaction>
    <physiologicalReaction direction="left-to-right" evidence="3">
        <dbReference type="Rhea" id="RHEA:29092"/>
    </physiologicalReaction>
</comment>
<comment type="cofactor">
    <cofactor evidence="3">
        <name>FMN</name>
        <dbReference type="ChEBI" id="CHEBI:58210"/>
    </cofactor>
    <text evidence="3">Binds 1 FMN.</text>
</comment>
<comment type="cofactor">
    <cofactor evidence="3">
        <name>[4Fe-4S] cluster</name>
        <dbReference type="ChEBI" id="CHEBI:49883"/>
    </cofactor>
    <text evidence="3">Binds 1 [4Fe-4S] cluster.</text>
</comment>
<comment type="subunit">
    <text evidence="3">Core subunit of respiratory chain NADH dehydrogenase (Complex I) which is composed of 45 different subunits (By similarity). This is a component of the flavoprotein-sulfur (FP) fragment of the enzyme (By similarity). Interacts with RAB5IF (By similarity).</text>
</comment>
<comment type="subcellular location">
    <subcellularLocation>
        <location evidence="2">Mitochondrion inner membrane</location>
        <topology evidence="2">Peripheral membrane protein</topology>
        <orientation evidence="2">Matrix side</orientation>
    </subcellularLocation>
</comment>
<comment type="similarity">
    <text evidence="6">Belongs to the complex I 51 kDa subunit family.</text>
</comment>
<dbReference type="EC" id="7.1.1.2" evidence="3"/>
<dbReference type="EMBL" id="DQ885648">
    <property type="protein sequence ID" value="ABH12157.1"/>
    <property type="molecule type" value="mRNA"/>
</dbReference>
<dbReference type="RefSeq" id="NP_001065293.1">
    <property type="nucleotide sequence ID" value="NM_001071825.1"/>
</dbReference>
<dbReference type="SMR" id="Q0MQI6"/>
<dbReference type="FunCoup" id="Q0MQI6">
    <property type="interactions" value="2312"/>
</dbReference>
<dbReference type="STRING" id="9598.ENSPTRP00000006828"/>
<dbReference type="PaxDb" id="9598-ENSPTRP00000006828"/>
<dbReference type="GeneID" id="747209"/>
<dbReference type="KEGG" id="ptr:747209"/>
<dbReference type="CTD" id="4723"/>
<dbReference type="eggNOG" id="KOG2658">
    <property type="taxonomic scope" value="Eukaryota"/>
</dbReference>
<dbReference type="InParanoid" id="Q0MQI6"/>
<dbReference type="OrthoDB" id="1569at9604"/>
<dbReference type="Proteomes" id="UP000002277">
    <property type="component" value="Unplaced"/>
</dbReference>
<dbReference type="GO" id="GO:0005743">
    <property type="term" value="C:mitochondrial inner membrane"/>
    <property type="evidence" value="ECO:0000250"/>
    <property type="project" value="UniProtKB"/>
</dbReference>
<dbReference type="GO" id="GO:0045271">
    <property type="term" value="C:respiratory chain complex I"/>
    <property type="evidence" value="ECO:0000250"/>
    <property type="project" value="UniProtKB"/>
</dbReference>
<dbReference type="GO" id="GO:0051539">
    <property type="term" value="F:4 iron, 4 sulfur cluster binding"/>
    <property type="evidence" value="ECO:0007669"/>
    <property type="project" value="UniProtKB-KW"/>
</dbReference>
<dbReference type="GO" id="GO:0010181">
    <property type="term" value="F:FMN binding"/>
    <property type="evidence" value="ECO:0007669"/>
    <property type="project" value="InterPro"/>
</dbReference>
<dbReference type="GO" id="GO:0046872">
    <property type="term" value="F:metal ion binding"/>
    <property type="evidence" value="ECO:0007669"/>
    <property type="project" value="UniProtKB-KW"/>
</dbReference>
<dbReference type="GO" id="GO:0051287">
    <property type="term" value="F:NAD binding"/>
    <property type="evidence" value="ECO:0007669"/>
    <property type="project" value="InterPro"/>
</dbReference>
<dbReference type="GO" id="GO:0008137">
    <property type="term" value="F:NADH dehydrogenase (ubiquinone) activity"/>
    <property type="evidence" value="ECO:0000250"/>
    <property type="project" value="UniProtKB"/>
</dbReference>
<dbReference type="GO" id="GO:0006120">
    <property type="term" value="P:mitochondrial electron transport, NADH to ubiquinone"/>
    <property type="evidence" value="ECO:0000250"/>
    <property type="project" value="UniProtKB"/>
</dbReference>
<dbReference type="FunFam" id="1.20.1440.230:FF:000001">
    <property type="entry name" value="Mitochondrial NADH dehydrogenase flavoprotein 1"/>
    <property type="match status" value="1"/>
</dbReference>
<dbReference type="FunFam" id="3.10.20.600:FF:000001">
    <property type="entry name" value="NADH dehydrogenase [ubiquinone] flavoprotein 1, mitochondrial"/>
    <property type="match status" value="1"/>
</dbReference>
<dbReference type="FunFam" id="3.40.50.11540:FF:000001">
    <property type="entry name" value="NADH dehydrogenase [ubiquinone] flavoprotein 1, mitochondrial"/>
    <property type="match status" value="1"/>
</dbReference>
<dbReference type="Gene3D" id="3.10.20.600">
    <property type="match status" value="1"/>
</dbReference>
<dbReference type="Gene3D" id="3.40.50.11540">
    <property type="entry name" value="NADH-ubiquinone oxidoreductase 51kDa subunit"/>
    <property type="match status" value="1"/>
</dbReference>
<dbReference type="Gene3D" id="1.20.1440.230">
    <property type="entry name" value="NADH-ubiquinone oxidoreductase 51kDa subunit, iron-sulphur binding domain"/>
    <property type="match status" value="1"/>
</dbReference>
<dbReference type="InterPro" id="IPR050837">
    <property type="entry name" value="ComplexI_51kDa_subunit"/>
</dbReference>
<dbReference type="InterPro" id="IPR001949">
    <property type="entry name" value="NADH-UbQ_OxRdtase_51kDa_CS"/>
</dbReference>
<dbReference type="InterPro" id="IPR011537">
    <property type="entry name" value="NADH-UbQ_OxRdtase_suF"/>
</dbReference>
<dbReference type="InterPro" id="IPR011538">
    <property type="entry name" value="Nuo51_FMN-bd"/>
</dbReference>
<dbReference type="InterPro" id="IPR037225">
    <property type="entry name" value="Nuo51_FMN-bd_sf"/>
</dbReference>
<dbReference type="InterPro" id="IPR019575">
    <property type="entry name" value="Nuop51_4Fe4S-bd"/>
</dbReference>
<dbReference type="InterPro" id="IPR037207">
    <property type="entry name" value="Nuop51_4Fe4S-bd_sf"/>
</dbReference>
<dbReference type="InterPro" id="IPR054765">
    <property type="entry name" value="SLBB_dom"/>
</dbReference>
<dbReference type="NCBIfam" id="TIGR01959">
    <property type="entry name" value="nuoF_fam"/>
    <property type="match status" value="1"/>
</dbReference>
<dbReference type="NCBIfam" id="NF010120">
    <property type="entry name" value="PRK13596.1"/>
    <property type="match status" value="1"/>
</dbReference>
<dbReference type="PANTHER" id="PTHR11780:SF10">
    <property type="entry name" value="NADH DEHYDROGENASE [UBIQUINONE] FLAVOPROTEIN 1, MITOCHONDRIAL"/>
    <property type="match status" value="1"/>
</dbReference>
<dbReference type="PANTHER" id="PTHR11780">
    <property type="entry name" value="NADH-UBIQUINONE OXIDOREDUCTASE FLAVOPROTEIN 1 NDUFV1"/>
    <property type="match status" value="1"/>
</dbReference>
<dbReference type="Pfam" id="PF01512">
    <property type="entry name" value="Complex1_51K"/>
    <property type="match status" value="1"/>
</dbReference>
<dbReference type="Pfam" id="PF10589">
    <property type="entry name" value="NADH_4Fe-4S"/>
    <property type="match status" value="1"/>
</dbReference>
<dbReference type="Pfam" id="PF22461">
    <property type="entry name" value="SLBB_2"/>
    <property type="match status" value="1"/>
</dbReference>
<dbReference type="SMART" id="SM00928">
    <property type="entry name" value="NADH_4Fe-4S"/>
    <property type="match status" value="1"/>
</dbReference>
<dbReference type="SUPFAM" id="SSF142019">
    <property type="entry name" value="Nqo1 FMN-binding domain-like"/>
    <property type="match status" value="1"/>
</dbReference>
<dbReference type="SUPFAM" id="SSF142984">
    <property type="entry name" value="Nqo1 middle domain-like"/>
    <property type="match status" value="1"/>
</dbReference>
<dbReference type="SUPFAM" id="SSF140490">
    <property type="entry name" value="Nqo1C-terminal domain-like"/>
    <property type="match status" value="1"/>
</dbReference>
<dbReference type="PROSITE" id="PS00644">
    <property type="entry name" value="COMPLEX1_51K_1"/>
    <property type="match status" value="1"/>
</dbReference>
<dbReference type="PROSITE" id="PS00645">
    <property type="entry name" value="COMPLEX1_51K_2"/>
    <property type="match status" value="1"/>
</dbReference>